<organism>
    <name type="scientific">Acidovorax ebreus (strain TPSY)</name>
    <name type="common">Diaphorobacter sp. (strain TPSY)</name>
    <dbReference type="NCBI Taxonomy" id="535289"/>
    <lineage>
        <taxon>Bacteria</taxon>
        <taxon>Pseudomonadati</taxon>
        <taxon>Pseudomonadota</taxon>
        <taxon>Betaproteobacteria</taxon>
        <taxon>Burkholderiales</taxon>
        <taxon>Comamonadaceae</taxon>
        <taxon>Diaphorobacter</taxon>
    </lineage>
</organism>
<sequence>MKRTYQPSKTRRARTHGFLVRMKTRGGRAVINARRAKGRKRLAV</sequence>
<reference key="1">
    <citation type="submission" date="2009-01" db="EMBL/GenBank/DDBJ databases">
        <title>Complete sequence of Diaphorobacter sp. TPSY.</title>
        <authorList>
            <consortium name="US DOE Joint Genome Institute"/>
            <person name="Lucas S."/>
            <person name="Copeland A."/>
            <person name="Lapidus A."/>
            <person name="Glavina del Rio T."/>
            <person name="Tice H."/>
            <person name="Bruce D."/>
            <person name="Goodwin L."/>
            <person name="Pitluck S."/>
            <person name="Chertkov O."/>
            <person name="Brettin T."/>
            <person name="Detter J.C."/>
            <person name="Han C."/>
            <person name="Larimer F."/>
            <person name="Land M."/>
            <person name="Hauser L."/>
            <person name="Kyrpides N."/>
            <person name="Mikhailova N."/>
            <person name="Coates J.D."/>
        </authorList>
    </citation>
    <scope>NUCLEOTIDE SEQUENCE [LARGE SCALE GENOMIC DNA]</scope>
    <source>
        <strain>TPSY</strain>
    </source>
</reference>
<accession>B9MJ02</accession>
<name>RL34_ACIET</name>
<evidence type="ECO:0000255" key="1">
    <source>
        <dbReference type="HAMAP-Rule" id="MF_00391"/>
    </source>
</evidence>
<evidence type="ECO:0000305" key="2"/>
<comment type="similarity">
    <text evidence="1">Belongs to the bacterial ribosomal protein bL34 family.</text>
</comment>
<feature type="chain" id="PRO_1000134441" description="Large ribosomal subunit protein bL34">
    <location>
        <begin position="1"/>
        <end position="44"/>
    </location>
</feature>
<protein>
    <recommendedName>
        <fullName evidence="1">Large ribosomal subunit protein bL34</fullName>
    </recommendedName>
    <alternativeName>
        <fullName evidence="2">50S ribosomal protein L34</fullName>
    </alternativeName>
</protein>
<proteinExistence type="inferred from homology"/>
<gene>
    <name evidence="1" type="primary">rpmH</name>
    <name type="ordered locus">Dtpsy_3545</name>
</gene>
<dbReference type="EMBL" id="CP001392">
    <property type="protein sequence ID" value="ACM34968.1"/>
    <property type="molecule type" value="Genomic_DNA"/>
</dbReference>
<dbReference type="RefSeq" id="WP_005798102.1">
    <property type="nucleotide sequence ID" value="NC_011992.1"/>
</dbReference>
<dbReference type="SMR" id="B9MJ02"/>
<dbReference type="GeneID" id="84683486"/>
<dbReference type="KEGG" id="dia:Dtpsy_3545"/>
<dbReference type="eggNOG" id="COG0230">
    <property type="taxonomic scope" value="Bacteria"/>
</dbReference>
<dbReference type="HOGENOM" id="CLU_129938_2_0_4"/>
<dbReference type="Proteomes" id="UP000000450">
    <property type="component" value="Chromosome"/>
</dbReference>
<dbReference type="GO" id="GO:1990904">
    <property type="term" value="C:ribonucleoprotein complex"/>
    <property type="evidence" value="ECO:0007669"/>
    <property type="project" value="UniProtKB-KW"/>
</dbReference>
<dbReference type="GO" id="GO:0005840">
    <property type="term" value="C:ribosome"/>
    <property type="evidence" value="ECO:0007669"/>
    <property type="project" value="UniProtKB-KW"/>
</dbReference>
<dbReference type="GO" id="GO:0003735">
    <property type="term" value="F:structural constituent of ribosome"/>
    <property type="evidence" value="ECO:0007669"/>
    <property type="project" value="InterPro"/>
</dbReference>
<dbReference type="GO" id="GO:0006412">
    <property type="term" value="P:translation"/>
    <property type="evidence" value="ECO:0007669"/>
    <property type="project" value="UniProtKB-UniRule"/>
</dbReference>
<dbReference type="FunFam" id="1.10.287.3980:FF:000001">
    <property type="entry name" value="Mitochondrial ribosomal protein L34"/>
    <property type="match status" value="1"/>
</dbReference>
<dbReference type="Gene3D" id="1.10.287.3980">
    <property type="match status" value="1"/>
</dbReference>
<dbReference type="HAMAP" id="MF_00391">
    <property type="entry name" value="Ribosomal_bL34"/>
    <property type="match status" value="1"/>
</dbReference>
<dbReference type="InterPro" id="IPR000271">
    <property type="entry name" value="Ribosomal_bL34"/>
</dbReference>
<dbReference type="InterPro" id="IPR020939">
    <property type="entry name" value="Ribosomal_bL34_CS"/>
</dbReference>
<dbReference type="NCBIfam" id="TIGR01030">
    <property type="entry name" value="rpmH_bact"/>
    <property type="match status" value="1"/>
</dbReference>
<dbReference type="PANTHER" id="PTHR14503:SF4">
    <property type="entry name" value="LARGE RIBOSOMAL SUBUNIT PROTEIN BL34M"/>
    <property type="match status" value="1"/>
</dbReference>
<dbReference type="PANTHER" id="PTHR14503">
    <property type="entry name" value="MITOCHONDRIAL RIBOSOMAL PROTEIN 34 FAMILY MEMBER"/>
    <property type="match status" value="1"/>
</dbReference>
<dbReference type="Pfam" id="PF00468">
    <property type="entry name" value="Ribosomal_L34"/>
    <property type="match status" value="1"/>
</dbReference>
<dbReference type="PROSITE" id="PS00784">
    <property type="entry name" value="RIBOSOMAL_L34"/>
    <property type="match status" value="1"/>
</dbReference>
<keyword id="KW-1185">Reference proteome</keyword>
<keyword id="KW-0687">Ribonucleoprotein</keyword>
<keyword id="KW-0689">Ribosomal protein</keyword>